<name>CIMA_LEPIN</name>
<organism>
    <name type="scientific">Leptospira interrogans serogroup Icterohaemorrhagiae serovar Lai (strain 56601)</name>
    <dbReference type="NCBI Taxonomy" id="189518"/>
    <lineage>
        <taxon>Bacteria</taxon>
        <taxon>Pseudomonadati</taxon>
        <taxon>Spirochaetota</taxon>
        <taxon>Spirochaetia</taxon>
        <taxon>Leptospirales</taxon>
        <taxon>Leptospiraceae</taxon>
        <taxon>Leptospira</taxon>
    </lineage>
</organism>
<sequence>MTKVETRLEILDVTLRDGEQTRGVSFSTSEKLNIAKFLLQKLNVDRVEIASARVSKGELETVQKIMEWAATEQLTERIEILGFVDGNKTVDWIKDSGAKVLNLLTKGSLHHLEKQLGKTPKEFFTDVSFVIEYAIKSGLKINVYLEDWSNGFRNSPDYVKSLVEHLSKEHIERIFLPDTLGVLSPEETFQGVDSLIQKYPDIHFEFHGHNDYDLSVANSLQAIRAGVKGLHASINGLGERAGNTPLEALVTTIHDKSNSKTNINEIAITEASRLVEVFSGKRISANRPIVGEDVFTQTAGVHADGDKKGNLYANPILPERFGRKRSYALGKLAGKASISENVKQLGMVLSEVVLQKVLERVIELGDQNKLVTPEDLPFIIADVSGRTGEKVLTIKSCNIHSGIGIRPHAQIELEYQGKIHKEISEGDGGYDAFMNALTKITNRLGISIPKLIDYEVRIPPGGKTDALVETRITWNKSLDLEEDQTFKTMGVHPDQTVAAVHATEKMLNQILQPWQI</sequence>
<comment type="function">
    <text evidence="2 3 4">Catalyzes the condensation of pyruvate and acetyl-coenzyme A to form (R)-citramalate (PubMed:15292141, PubMed:18498255, PubMed:19351325). Shows strict substrate specificity for pyruvate. Cannot use alpha-ketoisovalerate, alpha-ketobutyrate, alpha-ketoisocaproate, alpha-ketoglutarate or glyoxylate (PubMed:15292141, PubMed:18498255).</text>
</comment>
<comment type="catalytic activity">
    <reaction evidence="2 3 4">
        <text>pyruvate + acetyl-CoA + H2O = (3R)-citramalate + CoA + H(+)</text>
        <dbReference type="Rhea" id="RHEA:19045"/>
        <dbReference type="ChEBI" id="CHEBI:15361"/>
        <dbReference type="ChEBI" id="CHEBI:15377"/>
        <dbReference type="ChEBI" id="CHEBI:15378"/>
        <dbReference type="ChEBI" id="CHEBI:30934"/>
        <dbReference type="ChEBI" id="CHEBI:57287"/>
        <dbReference type="ChEBI" id="CHEBI:57288"/>
        <dbReference type="EC" id="2.3.3.21"/>
    </reaction>
    <physiologicalReaction direction="left-to-right" evidence="2 3 4">
        <dbReference type="Rhea" id="RHEA:19046"/>
    </physiologicalReaction>
</comment>
<comment type="cofactor">
    <cofactor evidence="3">
        <name>Mn(2+)</name>
        <dbReference type="ChEBI" id="CHEBI:29035"/>
    </cofactor>
    <text evidence="3">Mn(2+) is the most effective activator, followed by Co(2+), Ca(2+), Mg(2+) and Ni(2+).</text>
</comment>
<comment type="activity regulation">
    <text evidence="4">Regulated by the end-product isoleucine via a feedback inhibition. The binding of isoleucine has inhibitory effects on the binding of both pyruvate and acetyl-CoA. May act via conformational change of the dimer interface of the regulatory domain, leading to inhibition of the catalytic reaction.</text>
</comment>
<comment type="biophysicochemical properties">
    <kinetics>
        <KM evidence="2">43 uM for pyruvate</KM>
        <KM evidence="3">60 uM for pyruvate</KM>
        <KM evidence="3">1118 uM for acetyl-CoA</KM>
        <text evidence="2 3">kcat is 2.41 sec(-1) (PubMed:15292141). kcat is 10.3 sec(-1) with acetyl-CoA as substrate (PubMed:18498255). kcat is 9.13 sec(-1) with pyruvate as substrate (PubMed:18498255).</text>
    </kinetics>
    <temperatureDependence>
        <text evidence="2">Optimum temperature is 35-40 degrees Celsius.</text>
    </temperatureDependence>
</comment>
<comment type="pathway">
    <text evidence="2">Amino-acid biosynthesis; L-isoleucine biosynthesis; 2-oxobutanoate from pyruvate: step 1/3.</text>
</comment>
<comment type="subunit">
    <text evidence="3 4">Homodimer.</text>
</comment>
<comment type="induction">
    <text evidence="2">Expression is repressed by isoleucine but not by leucine.</text>
</comment>
<comment type="domain">
    <text evidence="3 4">Contains a catalytic N-terminal domain and a C-terminal regulatory domain, linked together by a flexible region (PubMed:18498255, PubMed:19351325). The catalytic domain consists of a TIM barrel flanked by an extended C-terminal region. The active site is located at the center of the TIM barrel near the C-terminal ends of the beta-strands and is composed of conserved residues of the beta-strands of one subunit and the C-terminal region of the other (PubMed:18498255).</text>
</comment>
<comment type="similarity">
    <text evidence="7">Belongs to the alpha-IPM synthase/homocitrate synthase family.</text>
</comment>
<keyword id="KW-0002">3D-structure</keyword>
<keyword id="KW-0028">Amino-acid biosynthesis</keyword>
<keyword id="KW-0100">Branched-chain amino acid biosynthesis</keyword>
<keyword id="KW-0412">Isoleucine biosynthesis</keyword>
<keyword id="KW-0456">Lyase</keyword>
<keyword id="KW-0464">Manganese</keyword>
<keyword id="KW-0479">Metal-binding</keyword>
<keyword id="KW-0670">Pyruvate</keyword>
<keyword id="KW-1185">Reference proteome</keyword>
<keyword id="KW-0808">Transferase</keyword>
<protein>
    <recommendedName>
        <fullName evidence="7">(R)-citramalate synthase CimA</fullName>
        <ecNumber evidence="2 3 4">2.3.3.21</ecNumber>
    </recommendedName>
    <alternativeName>
        <fullName evidence="6">LiCMS</fullName>
    </alternativeName>
</protein>
<dbReference type="EC" id="2.3.3.21" evidence="2 3 4"/>
<dbReference type="EMBL" id="AE010300">
    <property type="protein sequence ID" value="AAN49549.1"/>
    <property type="molecule type" value="Genomic_DNA"/>
</dbReference>
<dbReference type="RefSeq" id="NP_712531.1">
    <property type="nucleotide sequence ID" value="NC_004342.2"/>
</dbReference>
<dbReference type="RefSeq" id="WP_000169689.1">
    <property type="nucleotide sequence ID" value="NC_004342.2"/>
</dbReference>
<dbReference type="PDB" id="3BLE">
    <property type="method" value="X-ray"/>
    <property type="resolution" value="2.00 A"/>
    <property type="chains" value="A=1-325"/>
</dbReference>
<dbReference type="PDB" id="3BLF">
    <property type="method" value="X-ray"/>
    <property type="resolution" value="2.60 A"/>
    <property type="chains" value="A=1-325"/>
</dbReference>
<dbReference type="PDB" id="3BLI">
    <property type="method" value="X-ray"/>
    <property type="resolution" value="2.50 A"/>
    <property type="chains" value="A=1-325"/>
</dbReference>
<dbReference type="PDB" id="3F6G">
    <property type="method" value="X-ray"/>
    <property type="resolution" value="2.00 A"/>
    <property type="chains" value="A/B=390-516"/>
</dbReference>
<dbReference type="PDB" id="3F6H">
    <property type="method" value="X-ray"/>
    <property type="resolution" value="2.70 A"/>
    <property type="chains" value="A/B=390-516"/>
</dbReference>
<dbReference type="PDBsum" id="3BLE"/>
<dbReference type="PDBsum" id="3BLF"/>
<dbReference type="PDBsum" id="3BLI"/>
<dbReference type="PDBsum" id="3F6G"/>
<dbReference type="PDBsum" id="3F6H"/>
<dbReference type="SMR" id="Q8F3Q1"/>
<dbReference type="STRING" id="189518.LA_2350"/>
<dbReference type="PaxDb" id="189518-LA_2350"/>
<dbReference type="EnsemblBacteria" id="AAN49549">
    <property type="protein sequence ID" value="AAN49549"/>
    <property type="gene ID" value="LA_2350"/>
</dbReference>
<dbReference type="KEGG" id="lil:LA_2350"/>
<dbReference type="PATRIC" id="fig|189518.3.peg.2333"/>
<dbReference type="HOGENOM" id="CLU_022158_0_1_12"/>
<dbReference type="InParanoid" id="Q8F3Q1"/>
<dbReference type="OrthoDB" id="9804858at2"/>
<dbReference type="BioCyc" id="MetaCyc:MONOMER-11894"/>
<dbReference type="UniPathway" id="UPA00047">
    <property type="reaction ID" value="UER00066"/>
</dbReference>
<dbReference type="EvolutionaryTrace" id="Q8F3Q1"/>
<dbReference type="Proteomes" id="UP000001408">
    <property type="component" value="Chromosome I"/>
</dbReference>
<dbReference type="GO" id="GO:0043714">
    <property type="term" value="F:(R)-citramalate synthase activity"/>
    <property type="evidence" value="ECO:0007669"/>
    <property type="project" value="RHEA"/>
</dbReference>
<dbReference type="GO" id="GO:0003852">
    <property type="term" value="F:2-isopropylmalate synthase activity"/>
    <property type="evidence" value="ECO:0000318"/>
    <property type="project" value="GO_Central"/>
</dbReference>
<dbReference type="GO" id="GO:0016829">
    <property type="term" value="F:lyase activity"/>
    <property type="evidence" value="ECO:0007669"/>
    <property type="project" value="UniProtKB-KW"/>
</dbReference>
<dbReference type="GO" id="GO:0046872">
    <property type="term" value="F:metal ion binding"/>
    <property type="evidence" value="ECO:0007669"/>
    <property type="project" value="UniProtKB-KW"/>
</dbReference>
<dbReference type="GO" id="GO:0009097">
    <property type="term" value="P:isoleucine biosynthetic process"/>
    <property type="evidence" value="ECO:0007669"/>
    <property type="project" value="UniProtKB-UniPathway"/>
</dbReference>
<dbReference type="GO" id="GO:0009098">
    <property type="term" value="P:L-leucine biosynthetic process"/>
    <property type="evidence" value="ECO:0000318"/>
    <property type="project" value="GO_Central"/>
</dbReference>
<dbReference type="CDD" id="cd07945">
    <property type="entry name" value="DRE_TIM_CMS"/>
    <property type="match status" value="1"/>
</dbReference>
<dbReference type="FunFam" id="3.20.20.70:FF:000251">
    <property type="entry name" value="2-isopropylmalate synthase"/>
    <property type="match status" value="1"/>
</dbReference>
<dbReference type="FunFam" id="3.30.160.340:FF:000001">
    <property type="entry name" value="2-isopropylmalate synthase"/>
    <property type="match status" value="1"/>
</dbReference>
<dbReference type="Gene3D" id="3.30.160.340">
    <property type="match status" value="1"/>
</dbReference>
<dbReference type="Gene3D" id="3.30.160.740">
    <property type="match status" value="1"/>
</dbReference>
<dbReference type="Gene3D" id="3.20.20.70">
    <property type="entry name" value="Aldolase class I"/>
    <property type="match status" value="1"/>
</dbReference>
<dbReference type="InterPro" id="IPR050073">
    <property type="entry name" value="2-IPM_HCS-like"/>
</dbReference>
<dbReference type="InterPro" id="IPR013709">
    <property type="entry name" value="2-isopropylmalate_synth_dimer"/>
</dbReference>
<dbReference type="InterPro" id="IPR002034">
    <property type="entry name" value="AIPM/Hcit_synth_CS"/>
</dbReference>
<dbReference type="InterPro" id="IPR013785">
    <property type="entry name" value="Aldolase_TIM"/>
</dbReference>
<dbReference type="InterPro" id="IPR054907">
    <property type="entry name" value="CitmalSynth_CimA"/>
</dbReference>
<dbReference type="InterPro" id="IPR054691">
    <property type="entry name" value="LeuA/HCS_post-cat"/>
</dbReference>
<dbReference type="InterPro" id="IPR036230">
    <property type="entry name" value="LeuA_allosteric_dom_sf"/>
</dbReference>
<dbReference type="InterPro" id="IPR000891">
    <property type="entry name" value="PYR_CT"/>
</dbReference>
<dbReference type="NCBIfam" id="NF042433">
    <property type="entry name" value="CitmalDyn_Leptosp"/>
    <property type="match status" value="1"/>
</dbReference>
<dbReference type="PANTHER" id="PTHR10277:SF57">
    <property type="entry name" value="(R)-CITRAMALATE SYNTHASE CIMA"/>
    <property type="match status" value="1"/>
</dbReference>
<dbReference type="PANTHER" id="PTHR10277">
    <property type="entry name" value="HOMOCITRATE SYNTHASE-RELATED"/>
    <property type="match status" value="1"/>
</dbReference>
<dbReference type="Pfam" id="PF22617">
    <property type="entry name" value="HCS_D2"/>
    <property type="match status" value="1"/>
</dbReference>
<dbReference type="Pfam" id="PF00682">
    <property type="entry name" value="HMGL-like"/>
    <property type="match status" value="1"/>
</dbReference>
<dbReference type="Pfam" id="PF08502">
    <property type="entry name" value="LeuA_dimer"/>
    <property type="match status" value="1"/>
</dbReference>
<dbReference type="SMART" id="SM00917">
    <property type="entry name" value="LeuA_dimer"/>
    <property type="match status" value="1"/>
</dbReference>
<dbReference type="SUPFAM" id="SSF110921">
    <property type="entry name" value="2-isopropylmalate synthase LeuA, allosteric (dimerisation) domain"/>
    <property type="match status" value="1"/>
</dbReference>
<dbReference type="SUPFAM" id="SSF51569">
    <property type="entry name" value="Aldolase"/>
    <property type="match status" value="1"/>
</dbReference>
<dbReference type="PROSITE" id="PS00815">
    <property type="entry name" value="AIPM_HOMOCIT_SYNTH_1"/>
    <property type="match status" value="1"/>
</dbReference>
<dbReference type="PROSITE" id="PS50991">
    <property type="entry name" value="PYR_CT"/>
    <property type="match status" value="1"/>
</dbReference>
<feature type="chain" id="PRO_0000449424" description="(R)-citramalate synthase CimA">
    <location>
        <begin position="1"/>
        <end position="516"/>
    </location>
</feature>
<feature type="domain" description="Pyruvate carboxyltransferase" evidence="1">
    <location>
        <begin position="8"/>
        <end position="269"/>
    </location>
</feature>
<feature type="active site" description="Proton donor" evidence="8">
    <location>
        <position position="16"/>
    </location>
</feature>
<feature type="active site" description="Proton acceptor" evidence="8">
    <location>
        <position position="146"/>
    </location>
</feature>
<feature type="binding site" evidence="3">
    <location>
        <begin position="16"/>
        <end position="17"/>
    </location>
    <ligand>
        <name>pyruvate</name>
        <dbReference type="ChEBI" id="CHEBI:15361"/>
    </ligand>
</feature>
<feature type="binding site" evidence="8 9">
    <location>
        <position position="17"/>
    </location>
    <ligand>
        <name>Mn(2+)</name>
        <dbReference type="ChEBI" id="CHEBI:29035"/>
    </ligand>
</feature>
<feature type="binding site" evidence="3">
    <location>
        <position position="144"/>
    </location>
    <ligand>
        <name>pyruvate</name>
        <dbReference type="ChEBI" id="CHEBI:15361"/>
    </ligand>
</feature>
<feature type="binding site" evidence="3">
    <location>
        <position position="179"/>
    </location>
    <ligand>
        <name>pyruvate</name>
        <dbReference type="ChEBI" id="CHEBI:15361"/>
    </ligand>
</feature>
<feature type="binding site" evidence="8 9">
    <location>
        <position position="207"/>
    </location>
    <ligand>
        <name>Mn(2+)</name>
        <dbReference type="ChEBI" id="CHEBI:29035"/>
    </ligand>
</feature>
<feature type="binding site" evidence="8 9">
    <location>
        <position position="209"/>
    </location>
    <ligand>
        <name>Mn(2+)</name>
        <dbReference type="ChEBI" id="CHEBI:29035"/>
    </ligand>
</feature>
<feature type="mutagenesis site" description="Loss of activity." evidence="3">
    <original>R</original>
    <variation>K</variation>
    <variation>Q</variation>
    <location>
        <position position="16"/>
    </location>
</feature>
<feature type="mutagenesis site" description="34-fold increase in Km for pyruvate and 315-fold decrease in kcat." evidence="3">
    <original>D</original>
    <variation>A</variation>
    <location>
        <position position="17"/>
    </location>
</feature>
<feature type="mutagenesis site" description="4.4-fold increase in Km for pyruvate and 480-fold decrease in kcat." evidence="3">
    <original>D</original>
    <variation>N</variation>
    <location>
        <position position="17"/>
    </location>
</feature>
<feature type="mutagenesis site" description="4.7-fold increase in Km for pyruvate and 15.7-fold decrease in kcat." evidence="3">
    <original>L</original>
    <variation>A</variation>
    <location>
        <position position="81"/>
    </location>
</feature>
<feature type="mutagenesis site" description="3.3-fold increase in Km for pyruvate and 10.1-fold decrease in kcat." evidence="3">
    <original>L</original>
    <variation>V</variation>
    <location>
        <position position="81"/>
    </location>
</feature>
<feature type="mutagenesis site" description="5-fold increase in Km for acetyl-CoA and 120-fold decrease in kcat." evidence="3">
    <original>F</original>
    <variation>A</variation>
    <location>
        <position position="83"/>
    </location>
</feature>
<feature type="mutagenesis site" description="1.8-fold increase in Km for pyruvate and 3.4-fold decrease in kcat." evidence="3">
    <original>L</original>
    <variation>V</variation>
    <location>
        <position position="104"/>
    </location>
</feature>
<feature type="mutagenesis site" description="259-fold increase in Km for pyruvate and 76-fold decrease in kcat." evidence="3">
    <original>Y</original>
    <variation>L</variation>
    <location>
        <position position="144"/>
    </location>
</feature>
<feature type="mutagenesis site" description="114-fold increase in Km for pyruvate and 5.3-fold decrease in kcat." evidence="3">
    <original>Y</original>
    <variation>V</variation>
    <location>
        <position position="144"/>
    </location>
</feature>
<feature type="mutagenesis site" description="Minor effects on the binding of acetyl-CoA, but causes a strong decrease in kcat." evidence="3">
    <original>E</original>
    <variation>D</variation>
    <variation>Q</variation>
    <location>
        <position position="146"/>
    </location>
</feature>
<feature type="mutagenesis site" description="16.4-fold increase in Km for pyruvate and 186-fold decrease in kcat." evidence="3">
    <original>T</original>
    <variation>A</variation>
    <location>
        <position position="179"/>
    </location>
</feature>
<feature type="mutagenesis site" description="Loss of activity." evidence="3">
    <original>H</original>
    <variation>A</variation>
    <variation>N</variation>
    <location>
        <position position="302"/>
    </location>
</feature>
<feature type="mutagenesis site" description="5.2-fold increase in Km for acetyl-CoA and 16.6-fold decrease in kcat." evidence="3">
    <original>D</original>
    <variation>A</variation>
    <location>
        <position position="304"/>
    </location>
</feature>
<feature type="mutagenesis site" description="2.2-fold increase in Km for acetyl-CoA and 1.7-fold decrease in kcat." evidence="3">
    <original>N</original>
    <variation>A</variation>
    <location>
        <position position="310"/>
    </location>
</feature>
<feature type="mutagenesis site" description="8-fold increase in Km for acetyl-CoA and 6-fold decrease in kcat." evidence="3">
    <original>L</original>
    <variation>A</variation>
    <location>
        <position position="311"/>
    </location>
</feature>
<feature type="mutagenesis site" description="Loss of activity." evidence="3">
    <original>Y</original>
    <variation>A</variation>
    <location>
        <position position="312"/>
    </location>
</feature>
<feature type="mutagenesis site" description="No change in Km for acetyl-CoA and 2.3-fold decrease in kcat. Severely impairs inhibition by isoleucine." evidence="4">
    <original>Y</original>
    <variation>L</variation>
    <location>
        <position position="430"/>
    </location>
</feature>
<feature type="mutagenesis site" description="1.8-fold decrease in Km for acetyl-CoA and 5-fold decrease in kcat." evidence="4">
    <original>D</original>
    <variation>A</variation>
    <location>
        <position position="431"/>
    </location>
</feature>
<feature type="mutagenesis site" description="1.5-fold increase in Km for acetyl-CoA and 4.3 decrease in kcat." evidence="4">
    <original>L</original>
    <variation>V</variation>
    <location>
        <position position="451"/>
    </location>
</feature>
<feature type="mutagenesis site" description="1.4 decrease in Km for acetyl-CoA and 17-fold decrease in kcat. Still inhibited by isoleucine and weakly inhibited by leucine." evidence="4">
    <original>Y</original>
    <variation>A</variation>
    <location>
        <position position="454"/>
    </location>
</feature>
<feature type="mutagenesis site" description="1.3-fold decrease in Km for acetyl-CoA and 14-fold decrease in kcat. Abolishes inhibition by isoleucine." evidence="4">
    <original>I</original>
    <variation>A</variation>
    <location>
        <position position="458"/>
    </location>
</feature>
<feature type="mutagenesis site" description="1.8-fold decrease in Km for acetyl-CoA and 4.3-fold decrease in kcat." evidence="4">
    <original>T</original>
    <variation>A</variation>
    <location>
        <position position="464"/>
    </location>
</feature>
<feature type="mutagenesis site" description="No change in Km for acetyl-CoA and 2-fold decrease in kcat. Increases inhibition by isoleucine and leucine becomes an effective inhibitor." evidence="4">
    <original>V</original>
    <variation>A</variation>
    <location>
        <position position="468"/>
    </location>
</feature>
<feature type="mutagenesis site" description="1.5-fold decrease in Km for acetyl-CoA and 2.6-fold decrease in kcat." evidence="4">
    <original>P</original>
    <variation>A</variation>
    <location>
        <position position="493"/>
    </location>
</feature>
<feature type="mutagenesis site" description="1.6-fold decrease in Km for acetyl-CoA and 2.8-fold decrease in kcat." evidence="4">
    <original>Q</original>
    <variation>A</variation>
    <location>
        <position position="495"/>
    </location>
</feature>
<feature type="strand" evidence="16">
    <location>
        <begin position="9"/>
        <end position="12"/>
    </location>
</feature>
<feature type="helix" evidence="16">
    <location>
        <begin position="14"/>
        <end position="18"/>
    </location>
</feature>
<feature type="helix" evidence="16">
    <location>
        <begin position="28"/>
        <end position="40"/>
    </location>
</feature>
<feature type="strand" evidence="16">
    <location>
        <begin position="45"/>
        <end position="51"/>
    </location>
</feature>
<feature type="helix" evidence="16">
    <location>
        <begin position="58"/>
        <end position="71"/>
    </location>
</feature>
<feature type="helix" evidence="16">
    <location>
        <begin position="75"/>
        <end position="77"/>
    </location>
</feature>
<feature type="strand" evidence="16">
    <location>
        <begin position="78"/>
        <end position="85"/>
    </location>
</feature>
<feature type="helix" evidence="16">
    <location>
        <begin position="88"/>
        <end position="96"/>
    </location>
</feature>
<feature type="strand" evidence="16">
    <location>
        <begin position="100"/>
        <end position="106"/>
    </location>
</feature>
<feature type="helix" evidence="16">
    <location>
        <begin position="109"/>
        <end position="115"/>
    </location>
</feature>
<feature type="helix" evidence="16">
    <location>
        <begin position="120"/>
        <end position="136"/>
    </location>
</feature>
<feature type="strand" evidence="16">
    <location>
        <begin position="140"/>
        <end position="146"/>
    </location>
</feature>
<feature type="helix" evidence="16">
    <location>
        <begin position="148"/>
        <end position="154"/>
    </location>
</feature>
<feature type="helix" evidence="16">
    <location>
        <begin position="156"/>
        <end position="167"/>
    </location>
</feature>
<feature type="strand" evidence="16">
    <location>
        <begin position="172"/>
        <end position="177"/>
    </location>
</feature>
<feature type="helix" evidence="16">
    <location>
        <begin position="185"/>
        <end position="198"/>
    </location>
</feature>
<feature type="strand" evidence="16">
    <location>
        <begin position="204"/>
        <end position="207"/>
    </location>
</feature>
<feature type="helix" evidence="16">
    <location>
        <begin position="215"/>
        <end position="224"/>
    </location>
</feature>
<feature type="strand" evidence="16">
    <location>
        <begin position="228"/>
        <end position="233"/>
    </location>
</feature>
<feature type="helix" evidence="16">
    <location>
        <begin position="234"/>
        <end position="236"/>
    </location>
</feature>
<feature type="strand" evidence="17">
    <location>
        <begin position="238"/>
        <end position="241"/>
    </location>
</feature>
<feature type="helix" evidence="16">
    <location>
        <begin position="246"/>
        <end position="256"/>
    </location>
</feature>
<feature type="helix" evidence="16">
    <location>
        <begin position="265"/>
        <end position="267"/>
    </location>
</feature>
<feature type="helix" evidence="16">
    <location>
        <begin position="268"/>
        <end position="279"/>
    </location>
</feature>
<feature type="turn" evidence="16">
    <location>
        <begin position="288"/>
        <end position="290"/>
    </location>
</feature>
<feature type="turn" evidence="16">
    <location>
        <begin position="292"/>
        <end position="295"/>
    </location>
</feature>
<feature type="helix" evidence="16">
    <location>
        <begin position="318"/>
        <end position="321"/>
    </location>
</feature>
<feature type="strand" evidence="18">
    <location>
        <begin position="392"/>
        <end position="401"/>
    </location>
</feature>
<feature type="strand" evidence="18">
    <location>
        <begin position="408"/>
        <end position="415"/>
    </location>
</feature>
<feature type="strand" evidence="18">
    <location>
        <begin position="418"/>
        <end position="425"/>
    </location>
</feature>
<feature type="helix" evidence="18">
    <location>
        <begin position="429"/>
        <end position="444"/>
    </location>
</feature>
<feature type="strand" evidence="18">
    <location>
        <begin position="450"/>
        <end position="457"/>
    </location>
</feature>
<feature type="strand" evidence="18">
    <location>
        <begin position="468"/>
        <end position="475"/>
    </location>
</feature>
<feature type="helix" evidence="18">
    <location>
        <begin position="482"/>
        <end position="484"/>
    </location>
</feature>
<feature type="strand" evidence="18">
    <location>
        <begin position="486"/>
        <end position="494"/>
    </location>
</feature>
<feature type="helix" evidence="18">
    <location>
        <begin position="495"/>
        <end position="510"/>
    </location>
</feature>
<accession>Q8F3Q1</accession>
<proteinExistence type="evidence at protein level"/>
<evidence type="ECO:0000255" key="1">
    <source>
        <dbReference type="PROSITE-ProRule" id="PRU01151"/>
    </source>
</evidence>
<evidence type="ECO:0000269" key="2">
    <source>
    </source>
</evidence>
<evidence type="ECO:0000269" key="3">
    <source>
    </source>
</evidence>
<evidence type="ECO:0000269" key="4">
    <source>
    </source>
</evidence>
<evidence type="ECO:0000303" key="5">
    <source>
    </source>
</evidence>
<evidence type="ECO:0000303" key="6">
    <source>
    </source>
</evidence>
<evidence type="ECO:0000305" key="7"/>
<evidence type="ECO:0000305" key="8">
    <source>
    </source>
</evidence>
<evidence type="ECO:0000305" key="9">
    <source>
    </source>
</evidence>
<evidence type="ECO:0000312" key="10">
    <source>
        <dbReference type="EMBL" id="AAN49549.1"/>
    </source>
</evidence>
<evidence type="ECO:0007744" key="11">
    <source>
        <dbReference type="PDB" id="3BLE"/>
    </source>
</evidence>
<evidence type="ECO:0007744" key="12">
    <source>
        <dbReference type="PDB" id="3BLF"/>
    </source>
</evidence>
<evidence type="ECO:0007744" key="13">
    <source>
        <dbReference type="PDB" id="3BLI"/>
    </source>
</evidence>
<evidence type="ECO:0007744" key="14">
    <source>
        <dbReference type="PDB" id="3F6G"/>
    </source>
</evidence>
<evidence type="ECO:0007744" key="15">
    <source>
        <dbReference type="PDB" id="3F6H"/>
    </source>
</evidence>
<evidence type="ECO:0007829" key="16">
    <source>
        <dbReference type="PDB" id="3BLE"/>
    </source>
</evidence>
<evidence type="ECO:0007829" key="17">
    <source>
        <dbReference type="PDB" id="3BLI"/>
    </source>
</evidence>
<evidence type="ECO:0007829" key="18">
    <source>
        <dbReference type="PDB" id="3F6G"/>
    </source>
</evidence>
<gene>
    <name evidence="5" type="primary">cimA</name>
    <name evidence="10" type="ordered locus">LA_2350</name>
</gene>
<reference key="1">
    <citation type="journal article" date="2003" name="Nature">
        <title>Unique physiological and pathogenic features of Leptospira interrogans revealed by whole-genome sequencing.</title>
        <authorList>
            <person name="Ren S.-X."/>
            <person name="Fu G."/>
            <person name="Jiang X.-G."/>
            <person name="Zeng R."/>
            <person name="Miao Y.-G."/>
            <person name="Xu H."/>
            <person name="Zhang Y.-X."/>
            <person name="Xiong H."/>
            <person name="Lu G."/>
            <person name="Lu L.-F."/>
            <person name="Jiang H.-Q."/>
            <person name="Jia J."/>
            <person name="Tu Y.-F."/>
            <person name="Jiang J.-X."/>
            <person name="Gu W.-Y."/>
            <person name="Zhang Y.-Q."/>
            <person name="Cai Z."/>
            <person name="Sheng H.-H."/>
            <person name="Yin H.-F."/>
            <person name="Zhang Y."/>
            <person name="Zhu G.-F."/>
            <person name="Wan M."/>
            <person name="Huang H.-L."/>
            <person name="Qian Z."/>
            <person name="Wang S.-Y."/>
            <person name="Ma W."/>
            <person name="Yao Z.-J."/>
            <person name="Shen Y."/>
            <person name="Qiang B.-Q."/>
            <person name="Xia Q.-C."/>
            <person name="Guo X.-K."/>
            <person name="Danchin A."/>
            <person name="Saint Girons I."/>
            <person name="Somerville R.L."/>
            <person name="Wen Y.-M."/>
            <person name="Shi M.-H."/>
            <person name="Chen Z."/>
            <person name="Xu J.-G."/>
            <person name="Zhao G.-P."/>
        </authorList>
    </citation>
    <scope>NUCLEOTIDE SEQUENCE [LARGE SCALE GENOMIC DNA]</scope>
    <source>
        <strain>56601</strain>
    </source>
</reference>
<reference key="2">
    <citation type="journal article" date="2004" name="J. Bacteriol.">
        <title>Isoleucine biosynthesis in Leptospira interrogans serotype lai strain 56601 proceeds via a threonine-independent pathway.</title>
        <authorList>
            <person name="Xu H."/>
            <person name="Zhang Y."/>
            <person name="Guo X."/>
            <person name="Ren S."/>
            <person name="Staempfli A.A."/>
            <person name="Chiao J."/>
            <person name="Jiang W."/>
            <person name="Zhao G."/>
        </authorList>
    </citation>
    <scope>FUNCTION</scope>
    <scope>CATALYTIC ACTIVITY</scope>
    <scope>BIOPHYSICOCHEMICAL PROPERTIES</scope>
    <scope>PATHWAY</scope>
    <scope>INDUCTION</scope>
    <source>
        <strain>56601</strain>
    </source>
</reference>
<reference evidence="11 12 13" key="3">
    <citation type="journal article" date="2008" name="Biochem. J.">
        <title>Molecular basis of the substrate specificity and the catalytic mechanism of citramalate synthase from Leptospira interrogans.</title>
        <authorList>
            <person name="Ma J."/>
            <person name="Zhang P."/>
            <person name="Zhang Z."/>
            <person name="Zha M."/>
            <person name="Xu H."/>
            <person name="Zhao G."/>
            <person name="Ding J."/>
        </authorList>
    </citation>
    <scope>X-RAY CRYSTALLOGRAPHY (2.00 ANGSTROMS) OF 1-325 IN COMPLEXES WITH PYRUVATE; ACETYL-COA; MALONATE AND ZINC</scope>
    <scope>FUNCTION</scope>
    <scope>CATALYTIC ACTIVITY</scope>
    <scope>COFACTOR</scope>
    <scope>BIOPHYSICOCHEMICAL PROPERTIES</scope>
    <scope>SUBUNIT</scope>
    <scope>DOMAIN</scope>
    <scope>ACTIVE SITE</scope>
    <scope>MUTAGENESIS OF ARG-16; ASP-17; LEU-81; PHE-83; LEU-104; TYR-144; GLU-146; THR-179; HIS-302; ASP-304; ASN-310; LEU-311 AND TYR-312</scope>
    <source>
        <strain>56601</strain>
    </source>
</reference>
<reference evidence="14 15" key="4">
    <citation type="journal article" date="2009" name="Biochem. J.">
        <title>Molecular basis of the inhibitor selectivity and insights into the feedback inhibition mechanism of citramalate synthase from Leptospira interrogans.</title>
        <authorList>
            <person name="Zhang P."/>
            <person name="Ma J."/>
            <person name="Zhang Z."/>
            <person name="Zha M."/>
            <person name="Xu H."/>
            <person name="Zhao G."/>
            <person name="Ding J."/>
        </authorList>
    </citation>
    <scope>X-RAY CRYSTALLOGRAPHY (2.00 ANGSTROMS) OF 390-516 IN COMPLEXES WITH ZINC AND ISOLEUCINE</scope>
    <scope>FUNCTION</scope>
    <scope>CATALYTIC ACTIVITY</scope>
    <scope>ACTIVITY REGULATION</scope>
    <scope>SUBUNIT</scope>
    <scope>DOMAIN</scope>
    <scope>MUTAGENESIS OF TYR-430; ASP-431; LEU-451; TYR-454; ILE-458; THR-464; VAL-468; PRO-493 AND GLN-495</scope>
</reference>